<proteinExistence type="evidence at protein level"/>
<gene>
    <name evidence="3" type="primary">egtV</name>
    <name evidence="6" type="ordered locus">HPG27_778</name>
</gene>
<feature type="chain" id="PRO_0000457657" description="Ergothioneine transport ATP-binding protein EgtV">
    <location>
        <begin position="1"/>
        <end position="213"/>
    </location>
</feature>
<feature type="domain" description="ABC transporter" evidence="1">
    <location>
        <begin position="5"/>
        <end position="212"/>
    </location>
</feature>
<feature type="binding site" evidence="1">
    <location>
        <begin position="37"/>
        <end position="44"/>
    </location>
    <ligand>
        <name>ATP</name>
        <dbReference type="ChEBI" id="CHEBI:30616"/>
    </ligand>
</feature>
<dbReference type="EC" id="7.6.2.9" evidence="5"/>
<dbReference type="EMBL" id="CP001173">
    <property type="protein sequence ID" value="ACI27533.1"/>
    <property type="molecule type" value="Genomic_DNA"/>
</dbReference>
<dbReference type="RefSeq" id="WP_000659460.1">
    <property type="nucleotide sequence ID" value="NC_011333.1"/>
</dbReference>
<dbReference type="SMR" id="B5Z7I4"/>
<dbReference type="KEGG" id="hpg:HPG27_778"/>
<dbReference type="HOGENOM" id="CLU_000604_1_22_7"/>
<dbReference type="Proteomes" id="UP000001735">
    <property type="component" value="Chromosome"/>
</dbReference>
<dbReference type="GO" id="GO:0005886">
    <property type="term" value="C:plasma membrane"/>
    <property type="evidence" value="ECO:0007669"/>
    <property type="project" value="UniProtKB-SubCell"/>
</dbReference>
<dbReference type="GO" id="GO:0005524">
    <property type="term" value="F:ATP binding"/>
    <property type="evidence" value="ECO:0007669"/>
    <property type="project" value="UniProtKB-KW"/>
</dbReference>
<dbReference type="GO" id="GO:0016887">
    <property type="term" value="F:ATP hydrolysis activity"/>
    <property type="evidence" value="ECO:0007669"/>
    <property type="project" value="InterPro"/>
</dbReference>
<dbReference type="GO" id="GO:0006865">
    <property type="term" value="P:amino acid transport"/>
    <property type="evidence" value="ECO:0007669"/>
    <property type="project" value="UniProtKB-KW"/>
</dbReference>
<dbReference type="Gene3D" id="3.40.50.300">
    <property type="entry name" value="P-loop containing nucleotide triphosphate hydrolases"/>
    <property type="match status" value="1"/>
</dbReference>
<dbReference type="InterPro" id="IPR003593">
    <property type="entry name" value="AAA+_ATPase"/>
</dbReference>
<dbReference type="InterPro" id="IPR050093">
    <property type="entry name" value="ABC_SmlMolc_Importer"/>
</dbReference>
<dbReference type="InterPro" id="IPR003439">
    <property type="entry name" value="ABC_transporter-like_ATP-bd"/>
</dbReference>
<dbReference type="InterPro" id="IPR017871">
    <property type="entry name" value="ABC_transporter-like_CS"/>
</dbReference>
<dbReference type="InterPro" id="IPR027417">
    <property type="entry name" value="P-loop_NTPase"/>
</dbReference>
<dbReference type="PANTHER" id="PTHR42781">
    <property type="entry name" value="SPERMIDINE/PUTRESCINE IMPORT ATP-BINDING PROTEIN POTA"/>
    <property type="match status" value="1"/>
</dbReference>
<dbReference type="PANTHER" id="PTHR42781:SF4">
    <property type="entry name" value="SPERMIDINE_PUTRESCINE IMPORT ATP-BINDING PROTEIN POTA"/>
    <property type="match status" value="1"/>
</dbReference>
<dbReference type="Pfam" id="PF00005">
    <property type="entry name" value="ABC_tran"/>
    <property type="match status" value="1"/>
</dbReference>
<dbReference type="SMART" id="SM00382">
    <property type="entry name" value="AAA"/>
    <property type="match status" value="1"/>
</dbReference>
<dbReference type="SUPFAM" id="SSF52540">
    <property type="entry name" value="P-loop containing nucleoside triphosphate hydrolases"/>
    <property type="match status" value="1"/>
</dbReference>
<dbReference type="PROSITE" id="PS00211">
    <property type="entry name" value="ABC_TRANSPORTER_1"/>
    <property type="match status" value="1"/>
</dbReference>
<dbReference type="PROSITE" id="PS50893">
    <property type="entry name" value="ABC_TRANSPORTER_2"/>
    <property type="match status" value="1"/>
</dbReference>
<accession>B5Z7I4</accession>
<reference key="1">
    <citation type="journal article" date="2009" name="J. Bacteriol.">
        <title>The complete genome sequence of Helicobacter pylori strain G27.</title>
        <authorList>
            <person name="Baltrus D.A."/>
            <person name="Amieva M.R."/>
            <person name="Covacci A."/>
            <person name="Lowe T.M."/>
            <person name="Merrell D.S."/>
            <person name="Ottemann K.M."/>
            <person name="Stein M."/>
            <person name="Salama N.R."/>
            <person name="Guillemin K."/>
        </authorList>
    </citation>
    <scope>NUCLEOTIDE SEQUENCE [LARGE SCALE GENOMIC DNA]</scope>
    <source>
        <strain>G27</strain>
    </source>
</reference>
<reference key="2">
    <citation type="journal article" date="2022" name="Cell">
        <title>A microbial transporter of the dietary antioxidant ergothioneine.</title>
        <authorList>
            <person name="Dumitrescu D.G."/>
            <person name="Gordon E.M."/>
            <person name="Kovalyova Y."/>
            <person name="Seminara A.B."/>
            <person name="Duncan-Lowey B."/>
            <person name="Forster E.R."/>
            <person name="Zhou W."/>
            <person name="Booth C.J."/>
            <person name="Shen A."/>
            <person name="Kranzusch P.J."/>
            <person name="Hatzios S.K."/>
        </authorList>
    </citation>
    <scope>FUNCTION</scope>
    <scope>SUBUNIT</scope>
    <scope>SUBCELLULAR LOCATION</scope>
    <scope>DISRUPTION PHENOTYPE</scope>
    <source>
        <strain>G27</strain>
    </source>
</reference>
<comment type="function">
    <text evidence="2 4">Part of the ABC transporter complex EgtUV involved in the uptake of ergothioneine (EGT), a natural low-molecular weight (LMW) thiol antioxidant which protects H.pylori against bleach stress (PubMed:36347253). Responsible for energy coupling to the transport system (Probable).</text>
</comment>
<comment type="catalytic activity">
    <reaction evidence="5">
        <text>ergothioneine(out) + ATP + H2O = ergothioneine(in) + ADP + phosphate + H(+)</text>
        <dbReference type="Rhea" id="RHEA:76247"/>
        <dbReference type="ChEBI" id="CHEBI:15377"/>
        <dbReference type="ChEBI" id="CHEBI:15378"/>
        <dbReference type="ChEBI" id="CHEBI:30616"/>
        <dbReference type="ChEBI" id="CHEBI:43474"/>
        <dbReference type="ChEBI" id="CHEBI:134344"/>
        <dbReference type="ChEBI" id="CHEBI:456216"/>
        <dbReference type="EC" id="7.6.2.9"/>
    </reaction>
    <physiologicalReaction direction="left-to-right" evidence="5">
        <dbReference type="Rhea" id="RHEA:76248"/>
    </physiologicalReaction>
</comment>
<comment type="subunit">
    <text evidence="5">The complex is composed of two ATP-binding proteins (EgtV) and two transmembrane proteins (EgtU).</text>
</comment>
<comment type="subcellular location">
    <subcellularLocation>
        <location evidence="5">Cell inner membrane</location>
        <topology evidence="5">Peripheral membrane protein</topology>
    </subcellularLocation>
</comment>
<comment type="disruption phenotype">
    <text evidence="2">Disruption of the gene inhibits EGT uptake (PubMed:36347253). Mutant is more sensitive to bleach, the primary oxidant produced by activated neutrophils (PubMed:36347253).</text>
</comment>
<comment type="miscellaneous">
    <text evidence="2">The gastric pathogen H.pylori is unable to synthesize ergothioneine (PubMed:36347253). During infection, the EgtUV ABC transporter gives H.pylori a competitive colonization avantage in the host gastric environment by allowing the uptake of this human dietary antioxidant, which is present at high levels in gastrointestinal tissues (PubMed:36347253).</text>
</comment>
<comment type="similarity">
    <text evidence="4">Belongs to the ABC transporter superfamily.</text>
</comment>
<protein>
    <recommendedName>
        <fullName evidence="4">Ergothioneine transport ATP-binding protein EgtV</fullName>
        <ecNumber evidence="5">7.6.2.9</ecNumber>
    </recommendedName>
</protein>
<evidence type="ECO:0000255" key="1">
    <source>
        <dbReference type="PROSITE-ProRule" id="PRU00434"/>
    </source>
</evidence>
<evidence type="ECO:0000269" key="2">
    <source>
    </source>
</evidence>
<evidence type="ECO:0000303" key="3">
    <source>
    </source>
</evidence>
<evidence type="ECO:0000305" key="4"/>
<evidence type="ECO:0000305" key="5">
    <source>
    </source>
</evidence>
<evidence type="ECO:0000312" key="6">
    <source>
        <dbReference type="EMBL" id="ACI27533.1"/>
    </source>
</evidence>
<organism>
    <name type="scientific">Helicobacter pylori (strain G27)</name>
    <dbReference type="NCBI Taxonomy" id="563041"/>
    <lineage>
        <taxon>Bacteria</taxon>
        <taxon>Pseudomonadati</taxon>
        <taxon>Campylobacterota</taxon>
        <taxon>Epsilonproteobacteria</taxon>
        <taxon>Campylobacterales</taxon>
        <taxon>Helicobacteraceae</taxon>
        <taxon>Helicobacter</taxon>
    </lineage>
</organism>
<sequence>MKEIVTIENVSFNYRNRAVFKDFNLSIEKGDFLCVLGESGSGKSTLLGLILGLLKPSLGSVKIFNETLSNNAFLRQKIGYIAQGNSLFSHLNALQNMTFCLNLQGINKQAAQKEAKALALKMGLDESLMDKFPNELSGGQAQRVGIIRGIIHKPELILLDEPFSALDSFNRKNLQDLIKEIHQNSCATFIMVTHDEEEAQKLATKTLEIKALK</sequence>
<keyword id="KW-0029">Amino-acid transport</keyword>
<keyword id="KW-0067">ATP-binding</keyword>
<keyword id="KW-0997">Cell inner membrane</keyword>
<keyword id="KW-1003">Cell membrane</keyword>
<keyword id="KW-0472">Membrane</keyword>
<keyword id="KW-0547">Nucleotide-binding</keyword>
<keyword id="KW-1185">Reference proteome</keyword>
<keyword id="KW-1278">Translocase</keyword>
<keyword id="KW-0813">Transport</keyword>
<name>EGTV_HELPG</name>